<organism>
    <name type="scientific">Methanococcus maripaludis (strain C7 / ATCC BAA-1331)</name>
    <dbReference type="NCBI Taxonomy" id="426368"/>
    <lineage>
        <taxon>Archaea</taxon>
        <taxon>Methanobacteriati</taxon>
        <taxon>Methanobacteriota</taxon>
        <taxon>Methanomada group</taxon>
        <taxon>Methanococci</taxon>
        <taxon>Methanococcales</taxon>
        <taxon>Methanococcaceae</taxon>
        <taxon>Methanococcus</taxon>
    </lineage>
</organism>
<protein>
    <recommendedName>
        <fullName evidence="1">Large ribosomal subunit protein eL21</fullName>
    </recommendedName>
    <alternativeName>
        <fullName evidence="3">50S ribosomal protein L21e</fullName>
    </alternativeName>
</protein>
<gene>
    <name evidence="1" type="primary">rpl21e</name>
    <name type="ordered locus">MmarC7_1092</name>
</gene>
<proteinExistence type="inferred from homology"/>
<dbReference type="EMBL" id="CP000745">
    <property type="protein sequence ID" value="ABR66158.1"/>
    <property type="molecule type" value="Genomic_DNA"/>
</dbReference>
<dbReference type="SMR" id="A6VI82"/>
<dbReference type="STRING" id="426368.MmarC7_1092"/>
<dbReference type="KEGG" id="mmz:MmarC7_1092"/>
<dbReference type="eggNOG" id="arCOG04129">
    <property type="taxonomic scope" value="Archaea"/>
</dbReference>
<dbReference type="HOGENOM" id="CLU_103610_1_1_2"/>
<dbReference type="OrthoDB" id="6295at2157"/>
<dbReference type="GO" id="GO:1990904">
    <property type="term" value="C:ribonucleoprotein complex"/>
    <property type="evidence" value="ECO:0007669"/>
    <property type="project" value="UniProtKB-KW"/>
</dbReference>
<dbReference type="GO" id="GO:0005840">
    <property type="term" value="C:ribosome"/>
    <property type="evidence" value="ECO:0007669"/>
    <property type="project" value="UniProtKB-KW"/>
</dbReference>
<dbReference type="GO" id="GO:0003735">
    <property type="term" value="F:structural constituent of ribosome"/>
    <property type="evidence" value="ECO:0007669"/>
    <property type="project" value="InterPro"/>
</dbReference>
<dbReference type="GO" id="GO:0006412">
    <property type="term" value="P:translation"/>
    <property type="evidence" value="ECO:0007669"/>
    <property type="project" value="UniProtKB-UniRule"/>
</dbReference>
<dbReference type="FunFam" id="2.30.30.70:FF:000001">
    <property type="entry name" value="60S ribosomal protein L21"/>
    <property type="match status" value="1"/>
</dbReference>
<dbReference type="Gene3D" id="2.30.30.70">
    <property type="entry name" value="Ribosomal protein L21"/>
    <property type="match status" value="1"/>
</dbReference>
<dbReference type="HAMAP" id="MF_00369">
    <property type="entry name" value="Ribosomal_eL21"/>
    <property type="match status" value="1"/>
</dbReference>
<dbReference type="InterPro" id="IPR001147">
    <property type="entry name" value="Ribosomal_eL21"/>
</dbReference>
<dbReference type="InterPro" id="IPR022856">
    <property type="entry name" value="Ribosomal_eL21_arc"/>
</dbReference>
<dbReference type="InterPro" id="IPR018259">
    <property type="entry name" value="Ribosomal_eL21_CS"/>
</dbReference>
<dbReference type="InterPro" id="IPR036948">
    <property type="entry name" value="Ribosomal_eL21_sf"/>
</dbReference>
<dbReference type="InterPro" id="IPR008991">
    <property type="entry name" value="Translation_prot_SH3-like_sf"/>
</dbReference>
<dbReference type="NCBIfam" id="NF003303">
    <property type="entry name" value="PRK04306.1"/>
    <property type="match status" value="1"/>
</dbReference>
<dbReference type="PANTHER" id="PTHR20981">
    <property type="entry name" value="60S RIBOSOMAL PROTEIN L21"/>
    <property type="match status" value="1"/>
</dbReference>
<dbReference type="Pfam" id="PF01157">
    <property type="entry name" value="Ribosomal_L21e"/>
    <property type="match status" value="1"/>
</dbReference>
<dbReference type="SUPFAM" id="SSF50104">
    <property type="entry name" value="Translation proteins SH3-like domain"/>
    <property type="match status" value="1"/>
</dbReference>
<dbReference type="PROSITE" id="PS01171">
    <property type="entry name" value="RIBOSOMAL_L21E"/>
    <property type="match status" value="1"/>
</dbReference>
<keyword id="KW-0687">Ribonucleoprotein</keyword>
<keyword id="KW-0689">Ribosomal protein</keyword>
<reference key="1">
    <citation type="submission" date="2007-06" db="EMBL/GenBank/DDBJ databases">
        <title>Complete sequence of Methanococcus maripaludis C7.</title>
        <authorList>
            <consortium name="US DOE Joint Genome Institute"/>
            <person name="Copeland A."/>
            <person name="Lucas S."/>
            <person name="Lapidus A."/>
            <person name="Barry K."/>
            <person name="Glavina del Rio T."/>
            <person name="Dalin E."/>
            <person name="Tice H."/>
            <person name="Pitluck S."/>
            <person name="Clum A."/>
            <person name="Schmutz J."/>
            <person name="Larimer F."/>
            <person name="Land M."/>
            <person name="Hauser L."/>
            <person name="Kyrpides N."/>
            <person name="Anderson I."/>
            <person name="Sieprawska-Lupa M."/>
            <person name="Whitman W.B."/>
            <person name="Richardson P."/>
        </authorList>
    </citation>
    <scope>NUCLEOTIDE SEQUENCE [LARGE SCALE GENOMIC DNA]</scope>
    <source>
        <strain>C7 / ATCC BAA-1331</strain>
    </source>
</reference>
<comment type="similarity">
    <text evidence="1">Belongs to the eukaryotic ribosomal protein eL21 family.</text>
</comment>
<evidence type="ECO:0000255" key="1">
    <source>
        <dbReference type="HAMAP-Rule" id="MF_00369"/>
    </source>
</evidence>
<evidence type="ECO:0000256" key="2">
    <source>
        <dbReference type="SAM" id="MobiDB-lite"/>
    </source>
</evidence>
<evidence type="ECO:0000305" key="3"/>
<accession>A6VI82</accession>
<name>RL21_METM7</name>
<sequence>MQKSEGFRSKTRYKLQKHPRQKGMAPLTRALKCYTEGDRVHVVLDPSVQKGMPHPKFHGKTGVVVAQRGRSFLVRVKDGGKYKDIIARPQHLRESKL</sequence>
<feature type="chain" id="PRO_1000007122" description="Large ribosomal subunit protein eL21">
    <location>
        <begin position="1"/>
        <end position="97"/>
    </location>
</feature>
<feature type="region of interest" description="Disordered" evidence="2">
    <location>
        <begin position="1"/>
        <end position="26"/>
    </location>
</feature>
<feature type="compositionally biased region" description="Basic residues" evidence="2">
    <location>
        <begin position="9"/>
        <end position="21"/>
    </location>
</feature>